<feature type="initiator methionine" description="Removed" evidence="1">
    <location>
        <position position="1"/>
    </location>
</feature>
<feature type="chain" id="PRO_0000181162" description="Large ribosomal subunit protein bL27">
    <location>
        <begin position="2"/>
        <end position="85"/>
    </location>
</feature>
<feature type="region of interest" description="Disordered" evidence="2">
    <location>
        <begin position="1"/>
        <end position="20"/>
    </location>
</feature>
<keyword id="KW-1185">Reference proteome</keyword>
<keyword id="KW-0687">Ribonucleoprotein</keyword>
<keyword id="KW-0689">Ribosomal protein</keyword>
<reference key="1">
    <citation type="journal article" date="2002" name="Nucleic Acids Res.">
        <title>Genome sequence of Shigella flexneri 2a: insights into pathogenicity through comparison with genomes of Escherichia coli K12 and O157.</title>
        <authorList>
            <person name="Jin Q."/>
            <person name="Yuan Z."/>
            <person name="Xu J."/>
            <person name="Wang Y."/>
            <person name="Shen Y."/>
            <person name="Lu W."/>
            <person name="Wang J."/>
            <person name="Liu H."/>
            <person name="Yang J."/>
            <person name="Yang F."/>
            <person name="Zhang X."/>
            <person name="Zhang J."/>
            <person name="Yang G."/>
            <person name="Wu H."/>
            <person name="Qu D."/>
            <person name="Dong J."/>
            <person name="Sun L."/>
            <person name="Xue Y."/>
            <person name="Zhao A."/>
            <person name="Gao Y."/>
            <person name="Zhu J."/>
            <person name="Kan B."/>
            <person name="Ding K."/>
            <person name="Chen S."/>
            <person name="Cheng H."/>
            <person name="Yao Z."/>
            <person name="He B."/>
            <person name="Chen R."/>
            <person name="Ma D."/>
            <person name="Qiang B."/>
            <person name="Wen Y."/>
            <person name="Hou Y."/>
            <person name="Yu J."/>
        </authorList>
    </citation>
    <scope>NUCLEOTIDE SEQUENCE [LARGE SCALE GENOMIC DNA]</scope>
    <source>
        <strain>301 / Serotype 2a</strain>
    </source>
</reference>
<reference key="2">
    <citation type="journal article" date="2003" name="Infect. Immun.">
        <title>Complete genome sequence and comparative genomics of Shigella flexneri serotype 2a strain 2457T.</title>
        <authorList>
            <person name="Wei J."/>
            <person name="Goldberg M.B."/>
            <person name="Burland V."/>
            <person name="Venkatesan M.M."/>
            <person name="Deng W."/>
            <person name="Fournier G."/>
            <person name="Mayhew G.F."/>
            <person name="Plunkett G. III"/>
            <person name="Rose D.J."/>
            <person name="Darling A."/>
            <person name="Mau B."/>
            <person name="Perna N.T."/>
            <person name="Payne S.M."/>
            <person name="Runyen-Janecky L.J."/>
            <person name="Zhou S."/>
            <person name="Schwartz D.C."/>
            <person name="Blattner F.R."/>
        </authorList>
    </citation>
    <scope>NUCLEOTIDE SEQUENCE [LARGE SCALE GENOMIC DNA]</scope>
    <source>
        <strain>ATCC 700930 / 2457T / Serotype 2a</strain>
    </source>
</reference>
<sequence length="85" mass="9124">MAHKKAGGSTRNGRDSEAKRLGVKRFGGESVLAGSIIVRQRGTKFHAGANVGCGRDHTLFAKADGKVKFEVKGPKNRKFISIEAE</sequence>
<comment type="similarity">
    <text evidence="3">Belongs to the bacterial ribosomal protein bL27 family.</text>
</comment>
<evidence type="ECO:0000250" key="1"/>
<evidence type="ECO:0000256" key="2">
    <source>
        <dbReference type="SAM" id="MobiDB-lite"/>
    </source>
</evidence>
<evidence type="ECO:0000305" key="3"/>
<dbReference type="EMBL" id="AE005674">
    <property type="protein sequence ID" value="AAN44691.1"/>
    <property type="molecule type" value="Genomic_DNA"/>
</dbReference>
<dbReference type="EMBL" id="AE014073">
    <property type="protein sequence ID" value="AAP18505.1"/>
    <property type="molecule type" value="Genomic_DNA"/>
</dbReference>
<dbReference type="RefSeq" id="NP_708984.1">
    <property type="nucleotide sequence ID" value="NC_004337.2"/>
</dbReference>
<dbReference type="RefSeq" id="WP_000940595.1">
    <property type="nucleotide sequence ID" value="NZ_WPGW01000004.1"/>
</dbReference>
<dbReference type="SMR" id="P0A7M1"/>
<dbReference type="STRING" id="198214.SF3225"/>
<dbReference type="PaxDb" id="198214-SF3225"/>
<dbReference type="GeneID" id="1027109"/>
<dbReference type="GeneID" id="93778796"/>
<dbReference type="KEGG" id="sfl:SF3225"/>
<dbReference type="KEGG" id="sfx:S3443"/>
<dbReference type="PATRIC" id="fig|198214.7.peg.3826"/>
<dbReference type="HOGENOM" id="CLU_095424_4_1_6"/>
<dbReference type="Proteomes" id="UP000001006">
    <property type="component" value="Chromosome"/>
</dbReference>
<dbReference type="Proteomes" id="UP000002673">
    <property type="component" value="Chromosome"/>
</dbReference>
<dbReference type="GO" id="GO:0022625">
    <property type="term" value="C:cytosolic large ribosomal subunit"/>
    <property type="evidence" value="ECO:0007669"/>
    <property type="project" value="TreeGrafter"/>
</dbReference>
<dbReference type="GO" id="GO:0003735">
    <property type="term" value="F:structural constituent of ribosome"/>
    <property type="evidence" value="ECO:0007669"/>
    <property type="project" value="InterPro"/>
</dbReference>
<dbReference type="GO" id="GO:0006412">
    <property type="term" value="P:translation"/>
    <property type="evidence" value="ECO:0007669"/>
    <property type="project" value="UniProtKB-UniRule"/>
</dbReference>
<dbReference type="FunFam" id="2.40.50.100:FF:000001">
    <property type="entry name" value="50S ribosomal protein L27"/>
    <property type="match status" value="1"/>
</dbReference>
<dbReference type="Gene3D" id="2.40.50.100">
    <property type="match status" value="1"/>
</dbReference>
<dbReference type="HAMAP" id="MF_00539">
    <property type="entry name" value="Ribosomal_bL27"/>
    <property type="match status" value="1"/>
</dbReference>
<dbReference type="InterPro" id="IPR001684">
    <property type="entry name" value="Ribosomal_bL27"/>
</dbReference>
<dbReference type="InterPro" id="IPR018261">
    <property type="entry name" value="Ribosomal_bL27_CS"/>
</dbReference>
<dbReference type="NCBIfam" id="TIGR00062">
    <property type="entry name" value="L27"/>
    <property type="match status" value="1"/>
</dbReference>
<dbReference type="PANTHER" id="PTHR15893:SF0">
    <property type="entry name" value="LARGE RIBOSOMAL SUBUNIT PROTEIN BL27M"/>
    <property type="match status" value="1"/>
</dbReference>
<dbReference type="PANTHER" id="PTHR15893">
    <property type="entry name" value="RIBOSOMAL PROTEIN L27"/>
    <property type="match status" value="1"/>
</dbReference>
<dbReference type="Pfam" id="PF01016">
    <property type="entry name" value="Ribosomal_L27"/>
    <property type="match status" value="1"/>
</dbReference>
<dbReference type="PRINTS" id="PR00063">
    <property type="entry name" value="RIBOSOMALL27"/>
</dbReference>
<dbReference type="SUPFAM" id="SSF110324">
    <property type="entry name" value="Ribosomal L27 protein-like"/>
    <property type="match status" value="1"/>
</dbReference>
<dbReference type="PROSITE" id="PS00831">
    <property type="entry name" value="RIBOSOMAL_L27"/>
    <property type="match status" value="1"/>
</dbReference>
<proteinExistence type="inferred from homology"/>
<organism>
    <name type="scientific">Shigella flexneri</name>
    <dbReference type="NCBI Taxonomy" id="623"/>
    <lineage>
        <taxon>Bacteria</taxon>
        <taxon>Pseudomonadati</taxon>
        <taxon>Pseudomonadota</taxon>
        <taxon>Gammaproteobacteria</taxon>
        <taxon>Enterobacterales</taxon>
        <taxon>Enterobacteriaceae</taxon>
        <taxon>Shigella</taxon>
    </lineage>
</organism>
<accession>P0A7M1</accession>
<accession>P02427</accession>
<gene>
    <name type="primary">rpmA</name>
    <name type="ordered locus">SF3225</name>
    <name type="ordered locus">S3443</name>
</gene>
<protein>
    <recommendedName>
        <fullName evidence="3">Large ribosomal subunit protein bL27</fullName>
    </recommendedName>
    <alternativeName>
        <fullName>50S ribosomal protein L27</fullName>
    </alternativeName>
</protein>
<name>RL27_SHIFL</name>